<name>TRP1_BANDI</name>
<accession>P86563</accession>
<reference evidence="3" key="1">
    <citation type="journal article" date="2009" name="Peptides">
        <title>Neuropeptides in Heteroptera: identification of allatotropin-related peptide and tachykinin-related peptides using MALDI-TOF mass spectrometry.</title>
        <authorList>
            <person name="Neupert S."/>
            <person name="Russell W.K."/>
            <person name="Russell D.H."/>
            <person name="Lopez J.D. Jr."/>
            <person name="Predel R."/>
            <person name="Nachman R.J."/>
        </authorList>
    </citation>
    <scope>PROTEIN SEQUENCE</scope>
    <scope>SUBCELLULAR LOCATION</scope>
    <scope>TISSUE SPECIFICITY</scope>
    <scope>AMIDATION AT ARG-9</scope>
    <source>
        <tissue evidence="1">Antennal lobe</tissue>
    </source>
</reference>
<proteinExistence type="evidence at protein level"/>
<comment type="subcellular location">
    <subcellularLocation>
        <location evidence="1 3">Secreted</location>
    </subcellularLocation>
</comment>
<comment type="tissue specificity">
    <text evidence="1">Expressed in the antennal lobe (at protein level).</text>
</comment>
<feature type="peptide" id="PRO_0000395632" description="Tachykinin-related peptide 1" evidence="1">
    <location>
        <begin position="1"/>
        <end position="9"/>
    </location>
</feature>
<feature type="modified residue" description="Arginine amide" evidence="1">
    <location>
        <position position="9"/>
    </location>
</feature>
<sequence length="9" mass="921">GPSGFLGMR</sequence>
<evidence type="ECO:0000269" key="1">
    <source>
    </source>
</evidence>
<evidence type="ECO:0000303" key="2">
    <source>
    </source>
</evidence>
<evidence type="ECO:0000305" key="3"/>
<keyword id="KW-0027">Amidation</keyword>
<keyword id="KW-0903">Direct protein sequencing</keyword>
<keyword id="KW-0527">Neuropeptide</keyword>
<keyword id="KW-0964">Secreted</keyword>
<organism>
    <name type="scientific">Banasa dimiata</name>
    <name type="common">Banasa stink bug</name>
    <name type="synonym">Pentatoma dimiata</name>
    <dbReference type="NCBI Taxonomy" id="756487"/>
    <lineage>
        <taxon>Eukaryota</taxon>
        <taxon>Metazoa</taxon>
        <taxon>Ecdysozoa</taxon>
        <taxon>Arthropoda</taxon>
        <taxon>Hexapoda</taxon>
        <taxon>Insecta</taxon>
        <taxon>Pterygota</taxon>
        <taxon>Neoptera</taxon>
        <taxon>Paraneoptera</taxon>
        <taxon>Hemiptera</taxon>
        <taxon>Heteroptera</taxon>
        <taxon>Panheteroptera</taxon>
        <taxon>Pentatomomorpha</taxon>
        <taxon>Pentatomoidea</taxon>
        <taxon>Pentatomidae</taxon>
        <taxon>Pentatominae</taxon>
        <taxon>Banasa</taxon>
    </lineage>
</organism>
<protein>
    <recommendedName>
        <fullName evidence="2">Tachykinin-related peptide 1</fullName>
        <shortName evidence="2">TKRP-1</shortName>
    </recommendedName>
</protein>
<dbReference type="GO" id="GO:0005576">
    <property type="term" value="C:extracellular region"/>
    <property type="evidence" value="ECO:0007005"/>
    <property type="project" value="UniProtKB"/>
</dbReference>
<dbReference type="GO" id="GO:0007218">
    <property type="term" value="P:neuropeptide signaling pathway"/>
    <property type="evidence" value="ECO:0007669"/>
    <property type="project" value="UniProtKB-KW"/>
</dbReference>